<proteinExistence type="evidence at protein level"/>
<dbReference type="EMBL" id="AF319949">
    <property type="protein sequence ID" value="AAK52670.1"/>
    <property type="molecule type" value="mRNA"/>
</dbReference>
<dbReference type="EMBL" id="AK010326">
    <property type="protein sequence ID" value="BAB26853.1"/>
    <property type="molecule type" value="mRNA"/>
</dbReference>
<dbReference type="EMBL" id="AK011754">
    <property type="protein sequence ID" value="BAB27822.1"/>
    <property type="molecule type" value="mRNA"/>
</dbReference>
<dbReference type="EMBL" id="AK028317">
    <property type="protein sequence ID" value="BAC25875.1"/>
    <property type="molecule type" value="mRNA"/>
</dbReference>
<dbReference type="EMBL" id="AK030619">
    <property type="protein sequence ID" value="BAC27050.1"/>
    <property type="molecule type" value="mRNA"/>
</dbReference>
<dbReference type="EMBL" id="AK036983">
    <property type="protein sequence ID" value="BAC29658.1"/>
    <property type="molecule type" value="mRNA"/>
</dbReference>
<dbReference type="EMBL" id="AC140193">
    <property type="status" value="NOT_ANNOTATED_CDS"/>
    <property type="molecule type" value="Genomic_DNA"/>
</dbReference>
<dbReference type="EMBL" id="BC050817">
    <property type="protein sequence ID" value="AAH50817.1"/>
    <property type="molecule type" value="mRNA"/>
</dbReference>
<dbReference type="CCDS" id="CCDS29818.1">
    <molecule id="Q9D071-1"/>
</dbReference>
<dbReference type="RefSeq" id="NP_082428.1">
    <molecule id="Q9D071-1"/>
    <property type="nucleotide sequence ID" value="NM_028152.3"/>
</dbReference>
<dbReference type="PDB" id="6TBL">
    <property type="method" value="X-ray"/>
    <property type="resolution" value="2.65 A"/>
    <property type="chains" value="A/B=911-1031"/>
</dbReference>
<dbReference type="PDB" id="6TC0">
    <property type="method" value="X-ray"/>
    <property type="resolution" value="3.60 A"/>
    <property type="chains" value="C/F=1-1031"/>
</dbReference>
<dbReference type="PDBsum" id="6TBL"/>
<dbReference type="PDBsum" id="6TC0"/>
<dbReference type="SMR" id="Q9D071"/>
<dbReference type="BioGRID" id="215214">
    <property type="interactions" value="12"/>
</dbReference>
<dbReference type="FunCoup" id="Q9D071">
    <property type="interactions" value="4091"/>
</dbReference>
<dbReference type="IntAct" id="Q9D071">
    <property type="interactions" value="9"/>
</dbReference>
<dbReference type="STRING" id="10090.ENSMUSP00000130900"/>
<dbReference type="GlyGen" id="Q9D071">
    <property type="glycosylation" value="1 site, 1 O-linked glycan (1 site)"/>
</dbReference>
<dbReference type="iPTMnet" id="Q9D071"/>
<dbReference type="PhosphoSitePlus" id="Q9D071"/>
<dbReference type="SwissPalm" id="Q9D071"/>
<dbReference type="PaxDb" id="10090-ENSMUSP00000130900"/>
<dbReference type="PeptideAtlas" id="Q9D071"/>
<dbReference type="ProteomicsDB" id="252579">
    <molecule id="Q9D071-1"/>
</dbReference>
<dbReference type="ProteomicsDB" id="252580">
    <molecule id="Q9D071-2"/>
</dbReference>
<dbReference type="ProteomicsDB" id="252581">
    <molecule id="Q9D071-3"/>
</dbReference>
<dbReference type="Pumba" id="Q9D071"/>
<dbReference type="Antibodypedia" id="30936">
    <property type="antibodies" value="175 antibodies from 27 providers"/>
</dbReference>
<dbReference type="DNASU" id="72199"/>
<dbReference type="Ensembl" id="ENSMUST00000026168.9">
    <molecule id="Q9D071-3"/>
    <property type="protein sequence ID" value="ENSMUSP00000026168.3"/>
    <property type="gene ID" value="ENSMUSG00000025159.9"/>
</dbReference>
<dbReference type="Ensembl" id="ENSMUST00000171561.8">
    <molecule id="Q9D071-1"/>
    <property type="protein sequence ID" value="ENSMUSP00000130900.2"/>
    <property type="gene ID" value="ENSMUSG00000025159.9"/>
</dbReference>
<dbReference type="GeneID" id="72199"/>
<dbReference type="KEGG" id="mmu:72199"/>
<dbReference type="UCSC" id="uc008hmv.1">
    <molecule id="Q9D071-1"/>
    <property type="organism name" value="mouse"/>
</dbReference>
<dbReference type="AGR" id="MGI:1919449"/>
<dbReference type="CTD" id="64210"/>
<dbReference type="MGI" id="MGI:1919449">
    <property type="gene designation" value="Mms19"/>
</dbReference>
<dbReference type="VEuPathDB" id="HostDB:ENSMUSG00000025159"/>
<dbReference type="eggNOG" id="KOG1967">
    <property type="taxonomic scope" value="Eukaryota"/>
</dbReference>
<dbReference type="GeneTree" id="ENSGT00390000015583"/>
<dbReference type="InParanoid" id="Q9D071"/>
<dbReference type="OMA" id="FSFMPEF"/>
<dbReference type="OrthoDB" id="342900at2759"/>
<dbReference type="PhylomeDB" id="Q9D071"/>
<dbReference type="TreeFam" id="TF314469"/>
<dbReference type="BioGRID-ORCS" id="72199">
    <property type="hits" value="27 hits in 117 CRISPR screens"/>
</dbReference>
<dbReference type="ChiTaRS" id="Mms19">
    <property type="organism name" value="mouse"/>
</dbReference>
<dbReference type="PRO" id="PR:Q9D071"/>
<dbReference type="Proteomes" id="UP000000589">
    <property type="component" value="Chromosome 19"/>
</dbReference>
<dbReference type="RNAct" id="Q9D071">
    <property type="molecule type" value="protein"/>
</dbReference>
<dbReference type="Bgee" id="ENSMUSG00000025159">
    <property type="expression patterns" value="Expressed in embryonic post-anal tail and 257 other cell types or tissues"/>
</dbReference>
<dbReference type="ExpressionAtlas" id="Q9D071">
    <property type="expression patterns" value="baseline and differential"/>
</dbReference>
<dbReference type="GO" id="GO:0005737">
    <property type="term" value="C:cytoplasm"/>
    <property type="evidence" value="ECO:0000250"/>
    <property type="project" value="UniProtKB"/>
</dbReference>
<dbReference type="GO" id="GO:0097361">
    <property type="term" value="C:cytosolic [4Fe-4S] assembly targeting complex"/>
    <property type="evidence" value="ECO:0000314"/>
    <property type="project" value="FlyBase"/>
</dbReference>
<dbReference type="GO" id="GO:0071817">
    <property type="term" value="C:MMXD complex"/>
    <property type="evidence" value="ECO:0000250"/>
    <property type="project" value="UniProtKB"/>
</dbReference>
<dbReference type="GO" id="GO:0005654">
    <property type="term" value="C:nucleoplasm"/>
    <property type="evidence" value="ECO:0007669"/>
    <property type="project" value="Ensembl"/>
</dbReference>
<dbReference type="GO" id="GO:0005634">
    <property type="term" value="C:nucleus"/>
    <property type="evidence" value="ECO:0000250"/>
    <property type="project" value="UniProtKB"/>
</dbReference>
<dbReference type="GO" id="GO:0005819">
    <property type="term" value="C:spindle"/>
    <property type="evidence" value="ECO:0000250"/>
    <property type="project" value="UniProtKB"/>
</dbReference>
<dbReference type="GO" id="GO:0019899">
    <property type="term" value="F:enzyme binding"/>
    <property type="evidence" value="ECO:0000353"/>
    <property type="project" value="BHF-UCL"/>
</dbReference>
<dbReference type="GO" id="GO:0030331">
    <property type="term" value="F:nuclear estrogen receptor binding"/>
    <property type="evidence" value="ECO:0007669"/>
    <property type="project" value="Ensembl"/>
</dbReference>
<dbReference type="GO" id="GO:0003713">
    <property type="term" value="F:transcription coactivator activity"/>
    <property type="evidence" value="ECO:0007669"/>
    <property type="project" value="Ensembl"/>
</dbReference>
<dbReference type="GO" id="GO:0007059">
    <property type="term" value="P:chromosome segregation"/>
    <property type="evidence" value="ECO:0007669"/>
    <property type="project" value="UniProtKB-KW"/>
</dbReference>
<dbReference type="GO" id="GO:0006281">
    <property type="term" value="P:DNA repair"/>
    <property type="evidence" value="ECO:0007669"/>
    <property type="project" value="UniProtKB-KW"/>
</dbReference>
<dbReference type="GO" id="GO:0051604">
    <property type="term" value="P:protein maturation"/>
    <property type="evidence" value="ECO:0000250"/>
    <property type="project" value="UniProtKB"/>
</dbReference>
<dbReference type="FunFam" id="1.25.10.10:FF:000114">
    <property type="entry name" value="MMS19 nucleotide excision repair protein homolog isoform X2"/>
    <property type="match status" value="1"/>
</dbReference>
<dbReference type="Gene3D" id="1.25.10.10">
    <property type="entry name" value="Leucine-rich Repeat Variant"/>
    <property type="match status" value="2"/>
</dbReference>
<dbReference type="InterPro" id="IPR011989">
    <property type="entry name" value="ARM-like"/>
</dbReference>
<dbReference type="InterPro" id="IPR016024">
    <property type="entry name" value="ARM-type_fold"/>
</dbReference>
<dbReference type="InterPro" id="IPR039920">
    <property type="entry name" value="MMS19"/>
</dbReference>
<dbReference type="InterPro" id="IPR024687">
    <property type="entry name" value="MMS19_C"/>
</dbReference>
<dbReference type="InterPro" id="IPR029240">
    <property type="entry name" value="MMS19_N"/>
</dbReference>
<dbReference type="PANTHER" id="PTHR12891">
    <property type="entry name" value="DNA REPAIR/TRANSCRIPTION PROTEIN MET18/MMS19"/>
    <property type="match status" value="1"/>
</dbReference>
<dbReference type="PANTHER" id="PTHR12891:SF0">
    <property type="entry name" value="MMS19 NUCLEOTIDE EXCISION REPAIR PROTEIN HOMOLOG"/>
    <property type="match status" value="1"/>
</dbReference>
<dbReference type="Pfam" id="PF12460">
    <property type="entry name" value="MMS19_C"/>
    <property type="match status" value="1"/>
</dbReference>
<dbReference type="Pfam" id="PF14500">
    <property type="entry name" value="MMS19_N"/>
    <property type="match status" value="1"/>
</dbReference>
<dbReference type="SUPFAM" id="SSF48371">
    <property type="entry name" value="ARM repeat"/>
    <property type="match status" value="1"/>
</dbReference>
<reference key="1">
    <citation type="journal article" date="2001" name="Nucleic Acids Res.">
        <title>Cloning the human and mouse MMS19 genes and functional complementation of a yeast mms19 deletion mutant.</title>
        <authorList>
            <person name="Queimado L."/>
            <person name="Rao M."/>
            <person name="Schultz R.A."/>
            <person name="Koonin E.V."/>
            <person name="Aravind L."/>
            <person name="Nardo T."/>
            <person name="Stefanini M."/>
            <person name="Friedberg E.C."/>
        </authorList>
    </citation>
    <scope>NUCLEOTIDE SEQUENCE [MRNA] (ISOFORM 1)</scope>
    <scope>TISSUE SPECIFICITY</scope>
    <source>
        <strain>Swiss Webster</strain>
    </source>
</reference>
<reference key="2">
    <citation type="journal article" date="2005" name="Science">
        <title>The transcriptional landscape of the mammalian genome.</title>
        <authorList>
            <person name="Carninci P."/>
            <person name="Kasukawa T."/>
            <person name="Katayama S."/>
            <person name="Gough J."/>
            <person name="Frith M.C."/>
            <person name="Maeda N."/>
            <person name="Oyama R."/>
            <person name="Ravasi T."/>
            <person name="Lenhard B."/>
            <person name="Wells C."/>
            <person name="Kodzius R."/>
            <person name="Shimokawa K."/>
            <person name="Bajic V.B."/>
            <person name="Brenner S.E."/>
            <person name="Batalov S."/>
            <person name="Forrest A.R."/>
            <person name="Zavolan M."/>
            <person name="Davis M.J."/>
            <person name="Wilming L.G."/>
            <person name="Aidinis V."/>
            <person name="Allen J.E."/>
            <person name="Ambesi-Impiombato A."/>
            <person name="Apweiler R."/>
            <person name="Aturaliya R.N."/>
            <person name="Bailey T.L."/>
            <person name="Bansal M."/>
            <person name="Baxter L."/>
            <person name="Beisel K.W."/>
            <person name="Bersano T."/>
            <person name="Bono H."/>
            <person name="Chalk A.M."/>
            <person name="Chiu K.P."/>
            <person name="Choudhary V."/>
            <person name="Christoffels A."/>
            <person name="Clutterbuck D.R."/>
            <person name="Crowe M.L."/>
            <person name="Dalla E."/>
            <person name="Dalrymple B.P."/>
            <person name="de Bono B."/>
            <person name="Della Gatta G."/>
            <person name="di Bernardo D."/>
            <person name="Down T."/>
            <person name="Engstrom P."/>
            <person name="Fagiolini M."/>
            <person name="Faulkner G."/>
            <person name="Fletcher C.F."/>
            <person name="Fukushima T."/>
            <person name="Furuno M."/>
            <person name="Futaki S."/>
            <person name="Gariboldi M."/>
            <person name="Georgii-Hemming P."/>
            <person name="Gingeras T.R."/>
            <person name="Gojobori T."/>
            <person name="Green R.E."/>
            <person name="Gustincich S."/>
            <person name="Harbers M."/>
            <person name="Hayashi Y."/>
            <person name="Hensch T.K."/>
            <person name="Hirokawa N."/>
            <person name="Hill D."/>
            <person name="Huminiecki L."/>
            <person name="Iacono M."/>
            <person name="Ikeo K."/>
            <person name="Iwama A."/>
            <person name="Ishikawa T."/>
            <person name="Jakt M."/>
            <person name="Kanapin A."/>
            <person name="Katoh M."/>
            <person name="Kawasawa Y."/>
            <person name="Kelso J."/>
            <person name="Kitamura H."/>
            <person name="Kitano H."/>
            <person name="Kollias G."/>
            <person name="Krishnan S.P."/>
            <person name="Kruger A."/>
            <person name="Kummerfeld S.K."/>
            <person name="Kurochkin I.V."/>
            <person name="Lareau L.F."/>
            <person name="Lazarevic D."/>
            <person name="Lipovich L."/>
            <person name="Liu J."/>
            <person name="Liuni S."/>
            <person name="McWilliam S."/>
            <person name="Madan Babu M."/>
            <person name="Madera M."/>
            <person name="Marchionni L."/>
            <person name="Matsuda H."/>
            <person name="Matsuzawa S."/>
            <person name="Miki H."/>
            <person name="Mignone F."/>
            <person name="Miyake S."/>
            <person name="Morris K."/>
            <person name="Mottagui-Tabar S."/>
            <person name="Mulder N."/>
            <person name="Nakano N."/>
            <person name="Nakauchi H."/>
            <person name="Ng P."/>
            <person name="Nilsson R."/>
            <person name="Nishiguchi S."/>
            <person name="Nishikawa S."/>
            <person name="Nori F."/>
            <person name="Ohara O."/>
            <person name="Okazaki Y."/>
            <person name="Orlando V."/>
            <person name="Pang K.C."/>
            <person name="Pavan W.J."/>
            <person name="Pavesi G."/>
            <person name="Pesole G."/>
            <person name="Petrovsky N."/>
            <person name="Piazza S."/>
            <person name="Reed J."/>
            <person name="Reid J.F."/>
            <person name="Ring B.Z."/>
            <person name="Ringwald M."/>
            <person name="Rost B."/>
            <person name="Ruan Y."/>
            <person name="Salzberg S.L."/>
            <person name="Sandelin A."/>
            <person name="Schneider C."/>
            <person name="Schoenbach C."/>
            <person name="Sekiguchi K."/>
            <person name="Semple C.A."/>
            <person name="Seno S."/>
            <person name="Sessa L."/>
            <person name="Sheng Y."/>
            <person name="Shibata Y."/>
            <person name="Shimada H."/>
            <person name="Shimada K."/>
            <person name="Silva D."/>
            <person name="Sinclair B."/>
            <person name="Sperling S."/>
            <person name="Stupka E."/>
            <person name="Sugiura K."/>
            <person name="Sultana R."/>
            <person name="Takenaka Y."/>
            <person name="Taki K."/>
            <person name="Tammoja K."/>
            <person name="Tan S.L."/>
            <person name="Tang S."/>
            <person name="Taylor M.S."/>
            <person name="Tegner J."/>
            <person name="Teichmann S.A."/>
            <person name="Ueda H.R."/>
            <person name="van Nimwegen E."/>
            <person name="Verardo R."/>
            <person name="Wei C.L."/>
            <person name="Yagi K."/>
            <person name="Yamanishi H."/>
            <person name="Zabarovsky E."/>
            <person name="Zhu S."/>
            <person name="Zimmer A."/>
            <person name="Hide W."/>
            <person name="Bult C."/>
            <person name="Grimmond S.M."/>
            <person name="Teasdale R.D."/>
            <person name="Liu E.T."/>
            <person name="Brusic V."/>
            <person name="Quackenbush J."/>
            <person name="Wahlestedt C."/>
            <person name="Mattick J.S."/>
            <person name="Hume D.A."/>
            <person name="Kai C."/>
            <person name="Sasaki D."/>
            <person name="Tomaru Y."/>
            <person name="Fukuda S."/>
            <person name="Kanamori-Katayama M."/>
            <person name="Suzuki M."/>
            <person name="Aoki J."/>
            <person name="Arakawa T."/>
            <person name="Iida J."/>
            <person name="Imamura K."/>
            <person name="Itoh M."/>
            <person name="Kato T."/>
            <person name="Kawaji H."/>
            <person name="Kawagashira N."/>
            <person name="Kawashima T."/>
            <person name="Kojima M."/>
            <person name="Kondo S."/>
            <person name="Konno H."/>
            <person name="Nakano K."/>
            <person name="Ninomiya N."/>
            <person name="Nishio T."/>
            <person name="Okada M."/>
            <person name="Plessy C."/>
            <person name="Shibata K."/>
            <person name="Shiraki T."/>
            <person name="Suzuki S."/>
            <person name="Tagami M."/>
            <person name="Waki K."/>
            <person name="Watahiki A."/>
            <person name="Okamura-Oho Y."/>
            <person name="Suzuki H."/>
            <person name="Kawai J."/>
            <person name="Hayashizaki Y."/>
        </authorList>
    </citation>
    <scope>NUCLEOTIDE SEQUENCE [LARGE SCALE MRNA] (ISOFORMS 1 AND 2)</scope>
    <source>
        <strain>C57BL/6J</strain>
        <tissue>Brain</tissue>
        <tissue>Embryo</tissue>
        <tissue>Pituitary</tissue>
        <tissue>Vagina</tissue>
    </source>
</reference>
<reference key="3">
    <citation type="journal article" date="2009" name="PLoS Biol.">
        <title>Lineage-specific biology revealed by a finished genome assembly of the mouse.</title>
        <authorList>
            <person name="Church D.M."/>
            <person name="Goodstadt L."/>
            <person name="Hillier L.W."/>
            <person name="Zody M.C."/>
            <person name="Goldstein S."/>
            <person name="She X."/>
            <person name="Bult C.J."/>
            <person name="Agarwala R."/>
            <person name="Cherry J.L."/>
            <person name="DiCuccio M."/>
            <person name="Hlavina W."/>
            <person name="Kapustin Y."/>
            <person name="Meric P."/>
            <person name="Maglott D."/>
            <person name="Birtle Z."/>
            <person name="Marques A.C."/>
            <person name="Graves T."/>
            <person name="Zhou S."/>
            <person name="Teague B."/>
            <person name="Potamousis K."/>
            <person name="Churas C."/>
            <person name="Place M."/>
            <person name="Herschleb J."/>
            <person name="Runnheim R."/>
            <person name="Forrest D."/>
            <person name="Amos-Landgraf J."/>
            <person name="Schwartz D.C."/>
            <person name="Cheng Z."/>
            <person name="Lindblad-Toh K."/>
            <person name="Eichler E.E."/>
            <person name="Ponting C.P."/>
        </authorList>
    </citation>
    <scope>NUCLEOTIDE SEQUENCE [LARGE SCALE GENOMIC DNA]</scope>
    <source>
        <strain>C57BL/6J</strain>
    </source>
</reference>
<reference key="4">
    <citation type="journal article" date="2004" name="Genome Res.">
        <title>The status, quality, and expansion of the NIH full-length cDNA project: the Mammalian Gene Collection (MGC).</title>
        <authorList>
            <consortium name="The MGC Project Team"/>
        </authorList>
    </citation>
    <scope>NUCLEOTIDE SEQUENCE [LARGE SCALE MRNA] (ISOFORM 1)</scope>
    <source>
        <tissue>Embryo</tissue>
    </source>
</reference>
<reference key="5">
    <citation type="journal article" date="2010" name="Cell">
        <title>A tissue-specific atlas of mouse protein phosphorylation and expression.</title>
        <authorList>
            <person name="Huttlin E.L."/>
            <person name="Jedrychowski M.P."/>
            <person name="Elias J.E."/>
            <person name="Goswami T."/>
            <person name="Rad R."/>
            <person name="Beausoleil S.A."/>
            <person name="Villen J."/>
            <person name="Haas W."/>
            <person name="Sowa M.E."/>
            <person name="Gygi S.P."/>
        </authorList>
    </citation>
    <scope>IDENTIFICATION BY MASS SPECTROMETRY [LARGE SCALE ANALYSIS]</scope>
    <source>
        <tissue>Brain</tissue>
        <tissue>Heart</tissue>
        <tissue>Kidney</tissue>
        <tissue>Liver</tissue>
        <tissue>Lung</tissue>
        <tissue>Pancreas</tissue>
        <tissue>Spleen</tissue>
        <tissue>Testis</tissue>
    </source>
</reference>
<reference key="6">
    <citation type="journal article" date="2012" name="Science">
        <title>MMS19 links cytoplasmic iron-sulfur cluster assembly to DNA metabolism.</title>
        <authorList>
            <person name="Gari K."/>
            <person name="Leon Ortiz A.M."/>
            <person name="Borel V."/>
            <person name="Flynn H."/>
            <person name="Skehel J.M."/>
            <person name="Boulton S.J."/>
        </authorList>
    </citation>
    <scope>DISRUPTION PHENOTYPE</scope>
</reference>
<evidence type="ECO:0000250" key="1">
    <source>
        <dbReference type="UniProtKB" id="Q96T76"/>
    </source>
</evidence>
<evidence type="ECO:0000269" key="2">
    <source>
    </source>
</evidence>
<evidence type="ECO:0000269" key="3">
    <source>
    </source>
</evidence>
<evidence type="ECO:0000303" key="4">
    <source>
    </source>
</evidence>
<evidence type="ECO:0000305" key="5"/>
<evidence type="ECO:0000312" key="6">
    <source>
        <dbReference type="MGI" id="MGI:1919449"/>
    </source>
</evidence>
<evidence type="ECO:0007829" key="7">
    <source>
        <dbReference type="PDB" id="6TBL"/>
    </source>
</evidence>
<gene>
    <name evidence="6" type="primary">Mms19</name>
    <name type="synonym">Mms19l</name>
</gene>
<sequence>MAAATGLEEAVAPMGALCGLVQDFVMGQQEGPADQVAADVKSGGYTVLQVVEALGSSLENAEPRTRARGAQLLSQVLLQCHSLLSEKEVVHLILFYENRLKDHHLVVPSVLQGLRALSMSVALPPGLAVSVLKAIFQEVHVQSLLQVDRHTVFSIITNFMRSREEELKGLGADFTFGFIQVMDGEKDPRNLLLAFRIVHDLISKDYSLGPFVEELFEVTSCYFPIDFTPPPNDPYGIQREDLILSLRAVLASTPRFAEFLLPLLIEKVDSEILSAKLDSLQTLNACCAVYGQKELKDFLPSLWASIRREVFQTASERVEAEGLAALHSLTACLSCSVLRADAEDLLGSFLSNILQDCRHHLCEPDMKLVWPSAKLLQAAAGASARACEHLTSNVLPLLLEQFHKHSQSNQRRTILEMILGFLKLQQKWSYEDRDERPLSSFKDQLCSLVFMALTDPSTQLQLVGIRTLTVLGAQPGLLSAEDLELAVGHLYRLTFLEEDSQSCRVAALEASGTLATLYPGAFSRHLLPKLAEELHKGESDVARADGPTKCSRHFRCLQALSAVSTHPSIVKETLPLLLQHLCQANKGNMVTESSEVVAVCQSLQQVAEKCQQDPESYWYFHKTAVPCLFALAVQASMPEKESSVLRKVLLEDEVLAALASVIGTATTHLSPELAAQSVTCIVPLFLDGNTSFLPENSFPDQFQPFQDGSSGQRRLVALLTAFVCSLPRNVEIPQLNRLMRELLKQSCGHSCPFSSTAATKCFAGLLNKQPPGQQLEEFLQLAVGTVEAGLASESSRDQAFTLLLWVTKALVLRYHPLSACLTTRLMGLLSDPELGCAAADGFSLLMSDCTDVLTRAGHADVRIMFRQRFFTDNVPALVQGFHAAPQDVKPNYLKGLSHVLNRLPKPVLLPELPTLLSLLLEALSCPDSVVQLSTLSCLQPLLLEAPQIMSLHVDTLVTKFLNLSSSYSMAVRIAALQCMHALTRLPTSVLLPYKSQVIRALAKPLDDKKRLVRKEAVSARGEWFLLGSPGS</sequence>
<feature type="initiator methionine" description="Removed" evidence="1">
    <location>
        <position position="1"/>
    </location>
</feature>
<feature type="chain" id="PRO_0000096515" description="MMS19 nucleotide excision repair protein homolog">
    <location>
        <begin position="2"/>
        <end position="1031"/>
    </location>
</feature>
<feature type="repeat" description="HEAT 1">
    <location>
        <begin position="867"/>
        <end position="905"/>
    </location>
</feature>
<feature type="repeat" description="HEAT 2">
    <location>
        <begin position="909"/>
        <end position="947"/>
    </location>
</feature>
<feature type="repeat" description="HEAT 3">
    <location>
        <begin position="950"/>
        <end position="988"/>
    </location>
</feature>
<feature type="repeat" description="HEAT 4">
    <location>
        <begin position="991"/>
        <end position="1029"/>
    </location>
</feature>
<feature type="modified residue" description="N-acetylalanine" evidence="1">
    <location>
        <position position="2"/>
    </location>
</feature>
<feature type="modified residue" description="Phosphoserine" evidence="1">
    <location>
        <position position="1028"/>
    </location>
</feature>
<feature type="splice variant" id="VSP_044184" description="In isoform 3." evidence="5">
    <location>
        <begin position="166"/>
        <end position="208"/>
    </location>
</feature>
<feature type="splice variant" id="VSP_015569" description="In isoform 2." evidence="4">
    <original>DVK</original>
    <variation>GES</variation>
    <location>
        <begin position="887"/>
        <end position="889"/>
    </location>
</feature>
<feature type="splice variant" id="VSP_015570" description="In isoform 2." evidence="4">
    <location>
        <begin position="890"/>
        <end position="1031"/>
    </location>
</feature>
<feature type="sequence conflict" description="In Ref. 2; BAB26853." evidence="5" ref="2">
    <original>A</original>
    <variation>P</variation>
    <location>
        <position position="16"/>
    </location>
</feature>
<feature type="sequence conflict" description="In Ref. 1; AAK52670." evidence="5" ref="1">
    <original>I</original>
    <variation>V</variation>
    <location>
        <position position="237"/>
    </location>
</feature>
<feature type="sequence conflict" description="In Ref. 1; AAK52670." evidence="5" ref="1">
    <original>I</original>
    <variation>V</variation>
    <location>
        <position position="681"/>
    </location>
</feature>
<feature type="helix" evidence="7">
    <location>
        <begin position="915"/>
        <end position="922"/>
    </location>
</feature>
<feature type="helix" evidence="7">
    <location>
        <begin position="928"/>
        <end position="944"/>
    </location>
</feature>
<feature type="helix" evidence="7">
    <location>
        <begin position="946"/>
        <end position="949"/>
    </location>
</feature>
<feature type="helix" evidence="7">
    <location>
        <begin position="950"/>
        <end position="952"/>
    </location>
</feature>
<feature type="helix" evidence="7">
    <location>
        <begin position="953"/>
        <end position="963"/>
    </location>
</feature>
<feature type="helix" evidence="7">
    <location>
        <begin position="969"/>
        <end position="982"/>
    </location>
</feature>
<feature type="helix" evidence="7">
    <location>
        <begin position="987"/>
        <end position="1000"/>
    </location>
</feature>
<feature type="turn" evidence="7">
    <location>
        <begin position="1001"/>
        <end position="1003"/>
    </location>
</feature>
<feature type="helix" evidence="7">
    <location>
        <begin position="1004"/>
        <end position="1006"/>
    </location>
</feature>
<feature type="helix" evidence="7">
    <location>
        <begin position="1010"/>
        <end position="1024"/>
    </location>
</feature>
<feature type="turn" evidence="7">
    <location>
        <begin position="1025"/>
        <end position="1027"/>
    </location>
</feature>
<organism>
    <name type="scientific">Mus musculus</name>
    <name type="common">Mouse</name>
    <dbReference type="NCBI Taxonomy" id="10090"/>
    <lineage>
        <taxon>Eukaryota</taxon>
        <taxon>Metazoa</taxon>
        <taxon>Chordata</taxon>
        <taxon>Craniata</taxon>
        <taxon>Vertebrata</taxon>
        <taxon>Euteleostomi</taxon>
        <taxon>Mammalia</taxon>
        <taxon>Eutheria</taxon>
        <taxon>Euarchontoglires</taxon>
        <taxon>Glires</taxon>
        <taxon>Rodentia</taxon>
        <taxon>Myomorpha</taxon>
        <taxon>Muroidea</taxon>
        <taxon>Muridae</taxon>
        <taxon>Murinae</taxon>
        <taxon>Mus</taxon>
        <taxon>Mus</taxon>
    </lineage>
</organism>
<protein>
    <recommendedName>
        <fullName evidence="5">MMS19 nucleotide excision repair protein homolog</fullName>
    </recommendedName>
    <alternativeName>
        <fullName>MET18 homolog</fullName>
    </alternativeName>
    <alternativeName>
        <fullName>MMS19-like protein</fullName>
    </alternativeName>
</protein>
<comment type="function">
    <text evidence="1">Key component of the cytosolic iron-sulfur protein assembly (CIA) complex, a multiprotein complex that mediates the incorporation of iron-sulfur cluster into apoproteins specifically involved in DNA metabolism and genomic integrity. In the CIA complex, MMS19 acts as an adapter between early-acting CIA components and a subset of cellular target Fe/S proteins such as ERCC2/XPD, FANCJ and RTEL1, thereby playing a key role in nucleotide excision repair (NER), homologous recombination-mediated double-strand break DNA repair, DNA replication and RNA polymerase II (POL II) transcription. As a CIA complex component and in collaboration with CIAO1 and CIAO2, binds to and facilitates the assembly of most cytosolic-nuclear Fe/S proteins. As part of the mitotic spindle-associated MMXD complex, plays a role in chromosome segregation, probably by facilitating iron-sulfur cluster assembly into ERCC2/XPD. Together with CIAO2, facilitates the transfer of Fe-S clusters to the motor protein KIF4A, which ensures proper localization of KIF4A to mitotic machinery components to promote the progression of mitosis. Indirectly acts as a transcriptional coactivator of estrogen receptor (ER), via its role in iron-sulfur insertion into some component of the TFIIH-machinery.</text>
</comment>
<comment type="subunit">
    <text evidence="1">Component of the CIA complex. In the CIA complex, interacts directly with CIAO2B and CIAO3. Component of the MMXD complex, composed of CIAO1, ERCC2, CIAO2B, MMS19 and SLC25A5. Interacts with CIAO2B; the interaction is direct. Interacts with ERCC2/XPD; the interaction is direct. Interacts with ERCC3/XPB and NCOA3/RAC3. Interacts with RTEL1; the interaction mediates the association of RTEL1 with the CIA complex. Interacts with BRIP1. Interacts with KIF4A; the interaction facilitates the transfer of Fe-S clusters to KIF4A to ensure proper localization of KIF4A to the mitotic machinery components. Interacts with CCDC117; the interaction is indirect (By similarity).</text>
</comment>
<comment type="subcellular location">
    <subcellularLocation>
        <location evidence="1">Nucleus</location>
    </subcellularLocation>
    <subcellularLocation>
        <location evidence="1">Cytoplasm</location>
        <location evidence="1">Cytoskeleton</location>
        <location evidence="1">Spindle</location>
    </subcellularLocation>
</comment>
<comment type="alternative products">
    <event type="alternative splicing"/>
    <isoform>
        <id>Q9D071-1</id>
        <name>1</name>
        <sequence type="displayed"/>
    </isoform>
    <isoform>
        <id>Q9D071-2</id>
        <name>2</name>
        <sequence type="described" ref="VSP_015569 VSP_015570"/>
    </isoform>
    <isoform>
        <id>Q9D071-3</id>
        <name>3</name>
        <sequence type="described" ref="VSP_044184"/>
    </isoform>
</comment>
<comment type="tissue specificity">
    <text evidence="2">Ubiquitously expressed with higher expression in testis.</text>
</comment>
<comment type="PTM">
    <text evidence="1">Ubiquitinated; undergoes 'Lys-48'-linked polyubiquitination.</text>
</comment>
<comment type="disruption phenotype">
    <text evidence="3">Embryonically lethality before the implantation stage.</text>
</comment>
<comment type="similarity">
    <text evidence="5">Belongs to the MET18/MMS19 family.</text>
</comment>
<keyword id="KW-0002">3D-structure</keyword>
<keyword id="KW-0007">Acetylation</keyword>
<keyword id="KW-0010">Activator</keyword>
<keyword id="KW-0025">Alternative splicing</keyword>
<keyword id="KW-0159">Chromosome partition</keyword>
<keyword id="KW-0963">Cytoplasm</keyword>
<keyword id="KW-0206">Cytoskeleton</keyword>
<keyword id="KW-0227">DNA damage</keyword>
<keyword id="KW-0234">DNA repair</keyword>
<keyword id="KW-0539">Nucleus</keyword>
<keyword id="KW-0597">Phosphoprotein</keyword>
<keyword id="KW-1185">Reference proteome</keyword>
<keyword id="KW-0677">Repeat</keyword>
<keyword id="KW-0804">Transcription</keyword>
<keyword id="KW-0805">Transcription regulation</keyword>
<keyword id="KW-0832">Ubl conjugation</keyword>
<name>MMS19_MOUSE</name>
<accession>Q9D071</accession>
<accession>F8WHX3</accession>
<accession>Q925N8</accession>
<accession>Q9CWX3</accession>